<comment type="function">
    <text evidence="1">Catalyzes the last two sequential reactions in the de novo biosynthetic pathway for UDP-N-acetylglucosamine (UDP-GlcNAc). The C-terminal domain catalyzes the transfer of acetyl group from acetyl coenzyme A to glucosamine-1-phosphate (GlcN-1-P) to produce N-acetylglucosamine-1-phosphate (GlcNAc-1-P), which is converted into UDP-GlcNAc by the transfer of uridine 5-monophosphate (from uridine 5-triphosphate), a reaction catalyzed by the N-terminal domain.</text>
</comment>
<comment type="catalytic activity">
    <reaction evidence="1">
        <text>alpha-D-glucosamine 1-phosphate + acetyl-CoA = N-acetyl-alpha-D-glucosamine 1-phosphate + CoA + H(+)</text>
        <dbReference type="Rhea" id="RHEA:13725"/>
        <dbReference type="ChEBI" id="CHEBI:15378"/>
        <dbReference type="ChEBI" id="CHEBI:57287"/>
        <dbReference type="ChEBI" id="CHEBI:57288"/>
        <dbReference type="ChEBI" id="CHEBI:57776"/>
        <dbReference type="ChEBI" id="CHEBI:58516"/>
        <dbReference type="EC" id="2.3.1.157"/>
    </reaction>
</comment>
<comment type="catalytic activity">
    <reaction evidence="1">
        <text>N-acetyl-alpha-D-glucosamine 1-phosphate + UTP + H(+) = UDP-N-acetyl-alpha-D-glucosamine + diphosphate</text>
        <dbReference type="Rhea" id="RHEA:13509"/>
        <dbReference type="ChEBI" id="CHEBI:15378"/>
        <dbReference type="ChEBI" id="CHEBI:33019"/>
        <dbReference type="ChEBI" id="CHEBI:46398"/>
        <dbReference type="ChEBI" id="CHEBI:57705"/>
        <dbReference type="ChEBI" id="CHEBI:57776"/>
        <dbReference type="EC" id="2.7.7.23"/>
    </reaction>
</comment>
<comment type="cofactor">
    <cofactor evidence="1">
        <name>Mg(2+)</name>
        <dbReference type="ChEBI" id="CHEBI:18420"/>
    </cofactor>
    <text evidence="1">Binds 1 Mg(2+) ion per subunit.</text>
</comment>
<comment type="pathway">
    <text evidence="1">Nucleotide-sugar biosynthesis; UDP-N-acetyl-alpha-D-glucosamine biosynthesis; N-acetyl-alpha-D-glucosamine 1-phosphate from alpha-D-glucosamine 6-phosphate (route II): step 2/2.</text>
</comment>
<comment type="pathway">
    <text evidence="1">Nucleotide-sugar biosynthesis; UDP-N-acetyl-alpha-D-glucosamine biosynthesis; UDP-N-acetyl-alpha-D-glucosamine from N-acetyl-alpha-D-glucosamine 1-phosphate: step 1/1.</text>
</comment>
<comment type="pathway">
    <text evidence="1">Bacterial outer membrane biogenesis; LPS lipid A biosynthesis.</text>
</comment>
<comment type="subunit">
    <text evidence="1">Homotrimer.</text>
</comment>
<comment type="subcellular location">
    <subcellularLocation>
        <location evidence="1">Cytoplasm</location>
    </subcellularLocation>
</comment>
<comment type="similarity">
    <text evidence="1">In the N-terminal section; belongs to the N-acetylglucosamine-1-phosphate uridyltransferase family.</text>
</comment>
<comment type="similarity">
    <text evidence="1">In the C-terminal section; belongs to the transferase hexapeptide repeat family.</text>
</comment>
<reference key="1">
    <citation type="submission" date="2006-08" db="EMBL/GenBank/DDBJ databases">
        <title>Complete sequence of chromosome 1 of Shewanella sp. MR-7.</title>
        <authorList>
            <person name="Copeland A."/>
            <person name="Lucas S."/>
            <person name="Lapidus A."/>
            <person name="Barry K."/>
            <person name="Detter J.C."/>
            <person name="Glavina del Rio T."/>
            <person name="Hammon N."/>
            <person name="Israni S."/>
            <person name="Dalin E."/>
            <person name="Tice H."/>
            <person name="Pitluck S."/>
            <person name="Kiss H."/>
            <person name="Brettin T."/>
            <person name="Bruce D."/>
            <person name="Han C."/>
            <person name="Tapia R."/>
            <person name="Gilna P."/>
            <person name="Schmutz J."/>
            <person name="Larimer F."/>
            <person name="Land M."/>
            <person name="Hauser L."/>
            <person name="Kyrpides N."/>
            <person name="Mikhailova N."/>
            <person name="Nealson K."/>
            <person name="Konstantinidis K."/>
            <person name="Klappenbach J."/>
            <person name="Tiedje J."/>
            <person name="Richardson P."/>
        </authorList>
    </citation>
    <scope>NUCLEOTIDE SEQUENCE [LARGE SCALE GENOMIC DNA]</scope>
    <source>
        <strain>MR-7</strain>
    </source>
</reference>
<organism>
    <name type="scientific">Shewanella sp. (strain MR-7)</name>
    <dbReference type="NCBI Taxonomy" id="60481"/>
    <lineage>
        <taxon>Bacteria</taxon>
        <taxon>Pseudomonadati</taxon>
        <taxon>Pseudomonadota</taxon>
        <taxon>Gammaproteobacteria</taxon>
        <taxon>Alteromonadales</taxon>
        <taxon>Shewanellaceae</taxon>
        <taxon>Shewanella</taxon>
    </lineage>
</organism>
<proteinExistence type="inferred from homology"/>
<dbReference type="EC" id="2.7.7.23" evidence="1"/>
<dbReference type="EC" id="2.3.1.157" evidence="1"/>
<dbReference type="EMBL" id="CP000444">
    <property type="protein sequence ID" value="ABI44992.1"/>
    <property type="molecule type" value="Genomic_DNA"/>
</dbReference>
<dbReference type="SMR" id="Q0HPG3"/>
<dbReference type="KEGG" id="shm:Shewmr7_4015"/>
<dbReference type="HOGENOM" id="CLU_029499_15_2_6"/>
<dbReference type="UniPathway" id="UPA00113">
    <property type="reaction ID" value="UER00532"/>
</dbReference>
<dbReference type="UniPathway" id="UPA00113">
    <property type="reaction ID" value="UER00533"/>
</dbReference>
<dbReference type="UniPathway" id="UPA00973"/>
<dbReference type="GO" id="GO:0005737">
    <property type="term" value="C:cytoplasm"/>
    <property type="evidence" value="ECO:0007669"/>
    <property type="project" value="UniProtKB-SubCell"/>
</dbReference>
<dbReference type="GO" id="GO:0016020">
    <property type="term" value="C:membrane"/>
    <property type="evidence" value="ECO:0007669"/>
    <property type="project" value="GOC"/>
</dbReference>
<dbReference type="GO" id="GO:0019134">
    <property type="term" value="F:glucosamine-1-phosphate N-acetyltransferase activity"/>
    <property type="evidence" value="ECO:0007669"/>
    <property type="project" value="UniProtKB-UniRule"/>
</dbReference>
<dbReference type="GO" id="GO:0000287">
    <property type="term" value="F:magnesium ion binding"/>
    <property type="evidence" value="ECO:0007669"/>
    <property type="project" value="UniProtKB-UniRule"/>
</dbReference>
<dbReference type="GO" id="GO:0003977">
    <property type="term" value="F:UDP-N-acetylglucosamine diphosphorylase activity"/>
    <property type="evidence" value="ECO:0007669"/>
    <property type="project" value="UniProtKB-UniRule"/>
</dbReference>
<dbReference type="GO" id="GO:0000902">
    <property type="term" value="P:cell morphogenesis"/>
    <property type="evidence" value="ECO:0007669"/>
    <property type="project" value="UniProtKB-UniRule"/>
</dbReference>
<dbReference type="GO" id="GO:0071555">
    <property type="term" value="P:cell wall organization"/>
    <property type="evidence" value="ECO:0007669"/>
    <property type="project" value="UniProtKB-KW"/>
</dbReference>
<dbReference type="GO" id="GO:0009245">
    <property type="term" value="P:lipid A biosynthetic process"/>
    <property type="evidence" value="ECO:0007669"/>
    <property type="project" value="UniProtKB-UniRule"/>
</dbReference>
<dbReference type="GO" id="GO:0009252">
    <property type="term" value="P:peptidoglycan biosynthetic process"/>
    <property type="evidence" value="ECO:0007669"/>
    <property type="project" value="UniProtKB-UniRule"/>
</dbReference>
<dbReference type="GO" id="GO:0008360">
    <property type="term" value="P:regulation of cell shape"/>
    <property type="evidence" value="ECO:0007669"/>
    <property type="project" value="UniProtKB-KW"/>
</dbReference>
<dbReference type="GO" id="GO:0006048">
    <property type="term" value="P:UDP-N-acetylglucosamine biosynthetic process"/>
    <property type="evidence" value="ECO:0007669"/>
    <property type="project" value="UniProtKB-UniPathway"/>
</dbReference>
<dbReference type="CDD" id="cd02540">
    <property type="entry name" value="GT2_GlmU_N_bac"/>
    <property type="match status" value="1"/>
</dbReference>
<dbReference type="CDD" id="cd03353">
    <property type="entry name" value="LbH_GlmU_C"/>
    <property type="match status" value="1"/>
</dbReference>
<dbReference type="Gene3D" id="2.160.10.10">
    <property type="entry name" value="Hexapeptide repeat proteins"/>
    <property type="match status" value="1"/>
</dbReference>
<dbReference type="Gene3D" id="3.90.550.10">
    <property type="entry name" value="Spore Coat Polysaccharide Biosynthesis Protein SpsA, Chain A"/>
    <property type="match status" value="1"/>
</dbReference>
<dbReference type="HAMAP" id="MF_01631">
    <property type="entry name" value="GlmU"/>
    <property type="match status" value="1"/>
</dbReference>
<dbReference type="InterPro" id="IPR005882">
    <property type="entry name" value="Bifunctional_GlmU"/>
</dbReference>
<dbReference type="InterPro" id="IPR050065">
    <property type="entry name" value="GlmU-like"/>
</dbReference>
<dbReference type="InterPro" id="IPR038009">
    <property type="entry name" value="GlmU_C_LbH"/>
</dbReference>
<dbReference type="InterPro" id="IPR001451">
    <property type="entry name" value="Hexapep"/>
</dbReference>
<dbReference type="InterPro" id="IPR018357">
    <property type="entry name" value="Hexapep_transf_CS"/>
</dbReference>
<dbReference type="InterPro" id="IPR025877">
    <property type="entry name" value="MobA-like_NTP_Trfase"/>
</dbReference>
<dbReference type="InterPro" id="IPR029044">
    <property type="entry name" value="Nucleotide-diphossugar_trans"/>
</dbReference>
<dbReference type="InterPro" id="IPR011004">
    <property type="entry name" value="Trimer_LpxA-like_sf"/>
</dbReference>
<dbReference type="NCBIfam" id="TIGR01173">
    <property type="entry name" value="glmU"/>
    <property type="match status" value="1"/>
</dbReference>
<dbReference type="NCBIfam" id="NF006986">
    <property type="entry name" value="PRK09451.1"/>
    <property type="match status" value="1"/>
</dbReference>
<dbReference type="PANTHER" id="PTHR43584:SF3">
    <property type="entry name" value="BIFUNCTIONAL PROTEIN GLMU"/>
    <property type="match status" value="1"/>
</dbReference>
<dbReference type="PANTHER" id="PTHR43584">
    <property type="entry name" value="NUCLEOTIDYL TRANSFERASE"/>
    <property type="match status" value="1"/>
</dbReference>
<dbReference type="Pfam" id="PF00132">
    <property type="entry name" value="Hexapep"/>
    <property type="match status" value="1"/>
</dbReference>
<dbReference type="Pfam" id="PF12804">
    <property type="entry name" value="NTP_transf_3"/>
    <property type="match status" value="1"/>
</dbReference>
<dbReference type="SUPFAM" id="SSF53448">
    <property type="entry name" value="Nucleotide-diphospho-sugar transferases"/>
    <property type="match status" value="1"/>
</dbReference>
<dbReference type="SUPFAM" id="SSF51161">
    <property type="entry name" value="Trimeric LpxA-like enzymes"/>
    <property type="match status" value="1"/>
</dbReference>
<dbReference type="PROSITE" id="PS00101">
    <property type="entry name" value="HEXAPEP_TRANSFERASES"/>
    <property type="match status" value="1"/>
</dbReference>
<name>GLMU_SHESR</name>
<feature type="chain" id="PRO_0000263156" description="Bifunctional protein GlmU">
    <location>
        <begin position="1"/>
        <end position="454"/>
    </location>
</feature>
<feature type="region of interest" description="Pyrophosphorylase" evidence="1">
    <location>
        <begin position="1"/>
        <end position="226"/>
    </location>
</feature>
<feature type="region of interest" description="Linker" evidence="1">
    <location>
        <begin position="227"/>
        <end position="247"/>
    </location>
</feature>
<feature type="region of interest" description="N-acetyltransferase" evidence="1">
    <location>
        <begin position="248"/>
        <end position="454"/>
    </location>
</feature>
<feature type="active site" description="Proton acceptor" evidence="1">
    <location>
        <position position="360"/>
    </location>
</feature>
<feature type="binding site" evidence="1">
    <location>
        <begin position="8"/>
        <end position="11"/>
    </location>
    <ligand>
        <name>UDP-N-acetyl-alpha-D-glucosamine</name>
        <dbReference type="ChEBI" id="CHEBI:57705"/>
    </ligand>
</feature>
<feature type="binding site" evidence="1">
    <location>
        <position position="22"/>
    </location>
    <ligand>
        <name>UDP-N-acetyl-alpha-D-glucosamine</name>
        <dbReference type="ChEBI" id="CHEBI:57705"/>
    </ligand>
</feature>
<feature type="binding site" evidence="1">
    <location>
        <position position="73"/>
    </location>
    <ligand>
        <name>UDP-N-acetyl-alpha-D-glucosamine</name>
        <dbReference type="ChEBI" id="CHEBI:57705"/>
    </ligand>
</feature>
<feature type="binding site" evidence="1">
    <location>
        <begin position="78"/>
        <end position="79"/>
    </location>
    <ligand>
        <name>UDP-N-acetyl-alpha-D-glucosamine</name>
        <dbReference type="ChEBI" id="CHEBI:57705"/>
    </ligand>
</feature>
<feature type="binding site" evidence="1">
    <location>
        <begin position="100"/>
        <end position="102"/>
    </location>
    <ligand>
        <name>UDP-N-acetyl-alpha-D-glucosamine</name>
        <dbReference type="ChEBI" id="CHEBI:57705"/>
    </ligand>
</feature>
<feature type="binding site" evidence="1">
    <location>
        <position position="102"/>
    </location>
    <ligand>
        <name>Mg(2+)</name>
        <dbReference type="ChEBI" id="CHEBI:18420"/>
    </ligand>
</feature>
<feature type="binding site" evidence="1">
    <location>
        <position position="137"/>
    </location>
    <ligand>
        <name>UDP-N-acetyl-alpha-D-glucosamine</name>
        <dbReference type="ChEBI" id="CHEBI:57705"/>
    </ligand>
</feature>
<feature type="binding site" evidence="1">
    <location>
        <position position="151"/>
    </location>
    <ligand>
        <name>UDP-N-acetyl-alpha-D-glucosamine</name>
        <dbReference type="ChEBI" id="CHEBI:57705"/>
    </ligand>
</feature>
<feature type="binding site" evidence="1">
    <location>
        <position position="166"/>
    </location>
    <ligand>
        <name>UDP-N-acetyl-alpha-D-glucosamine</name>
        <dbReference type="ChEBI" id="CHEBI:57705"/>
    </ligand>
</feature>
<feature type="binding site" evidence="1">
    <location>
        <position position="224"/>
    </location>
    <ligand>
        <name>Mg(2+)</name>
        <dbReference type="ChEBI" id="CHEBI:18420"/>
    </ligand>
</feature>
<feature type="binding site" evidence="1">
    <location>
        <position position="224"/>
    </location>
    <ligand>
        <name>UDP-N-acetyl-alpha-D-glucosamine</name>
        <dbReference type="ChEBI" id="CHEBI:57705"/>
    </ligand>
</feature>
<feature type="binding site" evidence="1">
    <location>
        <position position="330"/>
    </location>
    <ligand>
        <name>UDP-N-acetyl-alpha-D-glucosamine</name>
        <dbReference type="ChEBI" id="CHEBI:57705"/>
    </ligand>
</feature>
<feature type="binding site" evidence="1">
    <location>
        <position position="348"/>
    </location>
    <ligand>
        <name>UDP-N-acetyl-alpha-D-glucosamine</name>
        <dbReference type="ChEBI" id="CHEBI:57705"/>
    </ligand>
</feature>
<feature type="binding site" evidence="1">
    <location>
        <position position="363"/>
    </location>
    <ligand>
        <name>UDP-N-acetyl-alpha-D-glucosamine</name>
        <dbReference type="ChEBI" id="CHEBI:57705"/>
    </ligand>
</feature>
<feature type="binding site" evidence="1">
    <location>
        <position position="374"/>
    </location>
    <ligand>
        <name>UDP-N-acetyl-alpha-D-glucosamine</name>
        <dbReference type="ChEBI" id="CHEBI:57705"/>
    </ligand>
</feature>
<feature type="binding site" evidence="1">
    <location>
        <position position="377"/>
    </location>
    <ligand>
        <name>acetyl-CoA</name>
        <dbReference type="ChEBI" id="CHEBI:57288"/>
    </ligand>
</feature>
<feature type="binding site" evidence="1">
    <location>
        <begin position="383"/>
        <end position="384"/>
    </location>
    <ligand>
        <name>acetyl-CoA</name>
        <dbReference type="ChEBI" id="CHEBI:57288"/>
    </ligand>
</feature>
<feature type="binding site" evidence="1">
    <location>
        <position position="402"/>
    </location>
    <ligand>
        <name>acetyl-CoA</name>
        <dbReference type="ChEBI" id="CHEBI:57288"/>
    </ligand>
</feature>
<feature type="binding site" evidence="1">
    <location>
        <position position="420"/>
    </location>
    <ligand>
        <name>acetyl-CoA</name>
        <dbReference type="ChEBI" id="CHEBI:57288"/>
    </ligand>
</feature>
<feature type="binding site" evidence="1">
    <location>
        <position position="437"/>
    </location>
    <ligand>
        <name>acetyl-CoA</name>
        <dbReference type="ChEBI" id="CHEBI:57288"/>
    </ligand>
</feature>
<gene>
    <name evidence="1" type="primary">glmU</name>
    <name type="ordered locus">Shewmr7_4015</name>
</gene>
<sequence length="454" mass="48039">MALNVVILAAGKGTRMRSDLPKVLHPIAHKSMVQHVIDTAHCIGSDAIQLVYGYGADKLKLALGEQQLNWMLQAEQLGTGHAVAQAIPNIDDNDTVLILYGDVPLIQASTLEALLAARPDQGVAILTVNLSNPTGYGRIVREQGKVVGIVEQKDANAEQLAINEINTGIMAVPGKALKTWLGRLSNNNAQGEYYLTDIIAMAHADGVEINTAQPQSAIEVEGANNRVQLAQLERAYQAREAEKLMIAGANLRDPSRIDIRGEVTVGMDVMVDVNVIFEGKVVIGNNVSIGAGAILIDCEIADNAEIKPYSIIEGAKLGVAASAGPFARLRPGAELMQDAHIGNFVEMKKAVLGVGSKAGHLAYLGDAQIGAGVNIGAGTITCNYDGANKHLTVIEDNVFVGSDTQLVAPVTIGKGATLGAGSTITRDVGEDELVITRVKQKHLTGWQRPVKIKE</sequence>
<protein>
    <recommendedName>
        <fullName evidence="1">Bifunctional protein GlmU</fullName>
    </recommendedName>
    <domain>
        <recommendedName>
            <fullName evidence="1">UDP-N-acetylglucosamine pyrophosphorylase</fullName>
            <ecNumber evidence="1">2.7.7.23</ecNumber>
        </recommendedName>
        <alternativeName>
            <fullName evidence="1">N-acetylglucosamine-1-phosphate uridyltransferase</fullName>
        </alternativeName>
    </domain>
    <domain>
        <recommendedName>
            <fullName evidence="1">Glucosamine-1-phosphate N-acetyltransferase</fullName>
            <ecNumber evidence="1">2.3.1.157</ecNumber>
        </recommendedName>
    </domain>
</protein>
<evidence type="ECO:0000255" key="1">
    <source>
        <dbReference type="HAMAP-Rule" id="MF_01631"/>
    </source>
</evidence>
<accession>Q0HPG3</accession>
<keyword id="KW-0012">Acyltransferase</keyword>
<keyword id="KW-0133">Cell shape</keyword>
<keyword id="KW-0961">Cell wall biogenesis/degradation</keyword>
<keyword id="KW-0963">Cytoplasm</keyword>
<keyword id="KW-0460">Magnesium</keyword>
<keyword id="KW-0479">Metal-binding</keyword>
<keyword id="KW-0511">Multifunctional enzyme</keyword>
<keyword id="KW-0548">Nucleotidyltransferase</keyword>
<keyword id="KW-0573">Peptidoglycan synthesis</keyword>
<keyword id="KW-0677">Repeat</keyword>
<keyword id="KW-0808">Transferase</keyword>